<proteinExistence type="inferred from homology"/>
<comment type="function">
    <text evidence="1">One of the primary rRNA binding proteins. Required for association of the 30S and 50S subunits to form the 70S ribosome, for tRNA binding and peptide bond formation. It has been suggested to have peptidyltransferase activity; this is somewhat controversial. Makes several contacts with the 16S rRNA in the 70S ribosome.</text>
</comment>
<comment type="subunit">
    <text evidence="1">Part of the 50S ribosomal subunit. Forms a bridge to the 30S subunit in the 70S ribosome.</text>
</comment>
<comment type="similarity">
    <text evidence="1">Belongs to the universal ribosomal protein uL2 family.</text>
</comment>
<organism>
    <name type="scientific">Citrifermentans bemidjiense (strain ATCC BAA-1014 / DSM 16622 / JCM 12645 / Bem)</name>
    <name type="common">Geobacter bemidjiensis</name>
    <dbReference type="NCBI Taxonomy" id="404380"/>
    <lineage>
        <taxon>Bacteria</taxon>
        <taxon>Pseudomonadati</taxon>
        <taxon>Thermodesulfobacteriota</taxon>
        <taxon>Desulfuromonadia</taxon>
        <taxon>Geobacterales</taxon>
        <taxon>Geobacteraceae</taxon>
        <taxon>Citrifermentans</taxon>
    </lineage>
</organism>
<name>RL2_CITBB</name>
<accession>B5EFQ3</accession>
<gene>
    <name evidence="1" type="primary">rplB</name>
    <name type="ordered locus">Gbem_0936</name>
</gene>
<sequence>MAIKTYKPTSPGRRAQTCSTFEEITACKPERSLVENLKKSGGRNSNGRITSRNVGGGHKQKYRIIDFRRDKTEIPAKVATIEYDPCRSARIALLNYADGEKRYILAPLSLKVGDTVISSEQADIKPGNALPIRCIPLGTIIHNIELKIGKGAQLARSAGTFAQLMAKEGKYGQVKLPSGEVRMILMDCKATIGQVGNADHENVSIGKAGRSRWLGVRPHVRGVAMNPVDHPHGGGEGRTSGGRHPVTPWGIPTKGYKTRTNKRSTPFIVKKRTK</sequence>
<protein>
    <recommendedName>
        <fullName evidence="1">Large ribosomal subunit protein uL2</fullName>
    </recommendedName>
    <alternativeName>
        <fullName evidence="3">50S ribosomal protein L2</fullName>
    </alternativeName>
</protein>
<keyword id="KW-1185">Reference proteome</keyword>
<keyword id="KW-0687">Ribonucleoprotein</keyword>
<keyword id="KW-0689">Ribosomal protein</keyword>
<keyword id="KW-0694">RNA-binding</keyword>
<keyword id="KW-0699">rRNA-binding</keyword>
<dbReference type="EMBL" id="CP001124">
    <property type="protein sequence ID" value="ACH37957.1"/>
    <property type="molecule type" value="Genomic_DNA"/>
</dbReference>
<dbReference type="RefSeq" id="WP_012529369.1">
    <property type="nucleotide sequence ID" value="NC_011146.1"/>
</dbReference>
<dbReference type="SMR" id="B5EFQ3"/>
<dbReference type="STRING" id="404380.Gbem_0936"/>
<dbReference type="KEGG" id="gbm:Gbem_0936"/>
<dbReference type="eggNOG" id="COG0090">
    <property type="taxonomic scope" value="Bacteria"/>
</dbReference>
<dbReference type="HOGENOM" id="CLU_036235_2_1_7"/>
<dbReference type="OrthoDB" id="9778722at2"/>
<dbReference type="Proteomes" id="UP000008825">
    <property type="component" value="Chromosome"/>
</dbReference>
<dbReference type="GO" id="GO:0015934">
    <property type="term" value="C:large ribosomal subunit"/>
    <property type="evidence" value="ECO:0007669"/>
    <property type="project" value="InterPro"/>
</dbReference>
<dbReference type="GO" id="GO:0019843">
    <property type="term" value="F:rRNA binding"/>
    <property type="evidence" value="ECO:0007669"/>
    <property type="project" value="UniProtKB-UniRule"/>
</dbReference>
<dbReference type="GO" id="GO:0003735">
    <property type="term" value="F:structural constituent of ribosome"/>
    <property type="evidence" value="ECO:0007669"/>
    <property type="project" value="InterPro"/>
</dbReference>
<dbReference type="GO" id="GO:0016740">
    <property type="term" value="F:transferase activity"/>
    <property type="evidence" value="ECO:0007669"/>
    <property type="project" value="InterPro"/>
</dbReference>
<dbReference type="GO" id="GO:0002181">
    <property type="term" value="P:cytoplasmic translation"/>
    <property type="evidence" value="ECO:0007669"/>
    <property type="project" value="TreeGrafter"/>
</dbReference>
<dbReference type="FunFam" id="2.30.30.30:FF:000001">
    <property type="entry name" value="50S ribosomal protein L2"/>
    <property type="match status" value="1"/>
</dbReference>
<dbReference type="FunFam" id="2.40.50.140:FF:000003">
    <property type="entry name" value="50S ribosomal protein L2"/>
    <property type="match status" value="1"/>
</dbReference>
<dbReference type="FunFam" id="4.10.950.10:FF:000001">
    <property type="entry name" value="50S ribosomal protein L2"/>
    <property type="match status" value="1"/>
</dbReference>
<dbReference type="Gene3D" id="2.30.30.30">
    <property type="match status" value="1"/>
</dbReference>
<dbReference type="Gene3D" id="2.40.50.140">
    <property type="entry name" value="Nucleic acid-binding proteins"/>
    <property type="match status" value="1"/>
</dbReference>
<dbReference type="Gene3D" id="4.10.950.10">
    <property type="entry name" value="Ribosomal protein L2, domain 3"/>
    <property type="match status" value="1"/>
</dbReference>
<dbReference type="HAMAP" id="MF_01320_B">
    <property type="entry name" value="Ribosomal_uL2_B"/>
    <property type="match status" value="1"/>
</dbReference>
<dbReference type="InterPro" id="IPR012340">
    <property type="entry name" value="NA-bd_OB-fold"/>
</dbReference>
<dbReference type="InterPro" id="IPR014722">
    <property type="entry name" value="Rib_uL2_dom2"/>
</dbReference>
<dbReference type="InterPro" id="IPR002171">
    <property type="entry name" value="Ribosomal_uL2"/>
</dbReference>
<dbReference type="InterPro" id="IPR005880">
    <property type="entry name" value="Ribosomal_uL2_bac/org-type"/>
</dbReference>
<dbReference type="InterPro" id="IPR022669">
    <property type="entry name" value="Ribosomal_uL2_C"/>
</dbReference>
<dbReference type="InterPro" id="IPR022671">
    <property type="entry name" value="Ribosomal_uL2_CS"/>
</dbReference>
<dbReference type="InterPro" id="IPR014726">
    <property type="entry name" value="Ribosomal_uL2_dom3"/>
</dbReference>
<dbReference type="InterPro" id="IPR022666">
    <property type="entry name" value="Ribosomal_uL2_RNA-bd_dom"/>
</dbReference>
<dbReference type="InterPro" id="IPR008991">
    <property type="entry name" value="Translation_prot_SH3-like_sf"/>
</dbReference>
<dbReference type="NCBIfam" id="TIGR01171">
    <property type="entry name" value="rplB_bact"/>
    <property type="match status" value="1"/>
</dbReference>
<dbReference type="PANTHER" id="PTHR13691:SF5">
    <property type="entry name" value="LARGE RIBOSOMAL SUBUNIT PROTEIN UL2M"/>
    <property type="match status" value="1"/>
</dbReference>
<dbReference type="PANTHER" id="PTHR13691">
    <property type="entry name" value="RIBOSOMAL PROTEIN L2"/>
    <property type="match status" value="1"/>
</dbReference>
<dbReference type="Pfam" id="PF00181">
    <property type="entry name" value="Ribosomal_L2"/>
    <property type="match status" value="1"/>
</dbReference>
<dbReference type="Pfam" id="PF03947">
    <property type="entry name" value="Ribosomal_L2_C"/>
    <property type="match status" value="1"/>
</dbReference>
<dbReference type="PIRSF" id="PIRSF002158">
    <property type="entry name" value="Ribosomal_L2"/>
    <property type="match status" value="1"/>
</dbReference>
<dbReference type="SMART" id="SM01383">
    <property type="entry name" value="Ribosomal_L2"/>
    <property type="match status" value="1"/>
</dbReference>
<dbReference type="SMART" id="SM01382">
    <property type="entry name" value="Ribosomal_L2_C"/>
    <property type="match status" value="1"/>
</dbReference>
<dbReference type="SUPFAM" id="SSF50249">
    <property type="entry name" value="Nucleic acid-binding proteins"/>
    <property type="match status" value="1"/>
</dbReference>
<dbReference type="SUPFAM" id="SSF50104">
    <property type="entry name" value="Translation proteins SH3-like domain"/>
    <property type="match status" value="1"/>
</dbReference>
<dbReference type="PROSITE" id="PS00467">
    <property type="entry name" value="RIBOSOMAL_L2"/>
    <property type="match status" value="1"/>
</dbReference>
<reference key="1">
    <citation type="submission" date="2008-07" db="EMBL/GenBank/DDBJ databases">
        <title>Complete sequence of Geobacter bemidjiensis BEM.</title>
        <authorList>
            <consortium name="US DOE Joint Genome Institute"/>
            <person name="Lucas S."/>
            <person name="Copeland A."/>
            <person name="Lapidus A."/>
            <person name="Glavina del Rio T."/>
            <person name="Dalin E."/>
            <person name="Tice H."/>
            <person name="Bruce D."/>
            <person name="Goodwin L."/>
            <person name="Pitluck S."/>
            <person name="Kiss H."/>
            <person name="Brettin T."/>
            <person name="Detter J.C."/>
            <person name="Han C."/>
            <person name="Kuske C.R."/>
            <person name="Schmutz J."/>
            <person name="Larimer F."/>
            <person name="Land M."/>
            <person name="Hauser L."/>
            <person name="Kyrpides N."/>
            <person name="Lykidis A."/>
            <person name="Lovley D."/>
            <person name="Richardson P."/>
        </authorList>
    </citation>
    <scope>NUCLEOTIDE SEQUENCE [LARGE SCALE GENOMIC DNA]</scope>
    <source>
        <strain>ATCC BAA-1014 / DSM 16622 / JCM 12645 / Bem</strain>
    </source>
</reference>
<feature type="chain" id="PRO_1000141557" description="Large ribosomal subunit protein uL2">
    <location>
        <begin position="1"/>
        <end position="274"/>
    </location>
</feature>
<feature type="region of interest" description="Disordered" evidence="2">
    <location>
        <begin position="224"/>
        <end position="259"/>
    </location>
</feature>
<evidence type="ECO:0000255" key="1">
    <source>
        <dbReference type="HAMAP-Rule" id="MF_01320"/>
    </source>
</evidence>
<evidence type="ECO:0000256" key="2">
    <source>
        <dbReference type="SAM" id="MobiDB-lite"/>
    </source>
</evidence>
<evidence type="ECO:0000305" key="3"/>